<sequence>MKADAKQITHLLKPLRLLLLGAPGSGKGTQTSRLLKQIPQLSSISSGDILRQEIKSESTLGREATTYIAQGKLLPDDLITRLITFRLSALGWLKPSAMWLLDGFPRTTAQASALDELLKQHDASLNLVVELDVPESTILERIENRYVHVPSGRVYNLQYNPPKVPGLDDITGEPLTKRLDDTAEVFKKRLEEYKKTNEPLKDYYKKSGIFGTVSGETSDIIFRNY</sequence>
<keyword id="KW-0342">GTP-binding</keyword>
<keyword id="KW-0418">Kinase</keyword>
<keyword id="KW-0496">Mitochondrion</keyword>
<keyword id="KW-0547">Nucleotide-binding</keyword>
<keyword id="KW-1185">Reference proteome</keyword>
<keyword id="KW-0808">Transferase</keyword>
<dbReference type="EC" id="2.7.4.10" evidence="1"/>
<dbReference type="EMBL" id="M77757">
    <property type="protein sequence ID" value="AAA34418.1"/>
    <property type="molecule type" value="Genomic_DNA"/>
</dbReference>
<dbReference type="EMBL" id="X65126">
    <property type="protein sequence ID" value="CAA46254.1"/>
    <property type="molecule type" value="Genomic_DNA"/>
</dbReference>
<dbReference type="EMBL" id="U18922">
    <property type="protein sequence ID" value="AAB64697.1"/>
    <property type="molecule type" value="Genomic_DNA"/>
</dbReference>
<dbReference type="EMBL" id="AY558457">
    <property type="protein sequence ID" value="AAS56783.1"/>
    <property type="molecule type" value="Genomic_DNA"/>
</dbReference>
<dbReference type="EMBL" id="BK006939">
    <property type="protein sequence ID" value="DAA07832.1"/>
    <property type="molecule type" value="Genomic_DNA"/>
</dbReference>
<dbReference type="PIR" id="S23568">
    <property type="entry name" value="S23568"/>
</dbReference>
<dbReference type="RefSeq" id="NP_011097.3">
    <property type="nucleotide sequence ID" value="NM_001179060.3"/>
</dbReference>
<dbReference type="SMR" id="P26364"/>
<dbReference type="BioGRID" id="36923">
    <property type="interactions" value="56"/>
</dbReference>
<dbReference type="DIP" id="DIP-4877N"/>
<dbReference type="FunCoup" id="P26364">
    <property type="interactions" value="444"/>
</dbReference>
<dbReference type="IntAct" id="P26364">
    <property type="interactions" value="24"/>
</dbReference>
<dbReference type="MINT" id="P26364"/>
<dbReference type="STRING" id="4932.YER170W"/>
<dbReference type="PaxDb" id="4932-YER170W"/>
<dbReference type="PeptideAtlas" id="P26364"/>
<dbReference type="EnsemblFungi" id="YER170W_mRNA">
    <property type="protein sequence ID" value="YER170W"/>
    <property type="gene ID" value="YER170W"/>
</dbReference>
<dbReference type="GeneID" id="856917"/>
<dbReference type="KEGG" id="sce:YER170W"/>
<dbReference type="AGR" id="SGD:S000000972"/>
<dbReference type="SGD" id="S000000972">
    <property type="gene designation" value="ADK2"/>
</dbReference>
<dbReference type="VEuPathDB" id="FungiDB:YER170W"/>
<dbReference type="eggNOG" id="KOG3078">
    <property type="taxonomic scope" value="Eukaryota"/>
</dbReference>
<dbReference type="GeneTree" id="ENSGT00940000175921"/>
<dbReference type="HOGENOM" id="CLU_032354_1_1_1"/>
<dbReference type="InParanoid" id="P26364"/>
<dbReference type="OMA" id="IKVENTM"/>
<dbReference type="OrthoDB" id="439792at2759"/>
<dbReference type="BioCyc" id="YEAST:YER170W-MONOMER"/>
<dbReference type="Reactome" id="R-SCE-499943">
    <property type="pathway name" value="Interconversion of nucleotide di- and triphosphates"/>
</dbReference>
<dbReference type="Reactome" id="R-SCE-983231">
    <property type="pathway name" value="Factors involved in megakaryocyte development and platelet production"/>
</dbReference>
<dbReference type="BioGRID-ORCS" id="856917">
    <property type="hits" value="0 hits in 10 CRISPR screens"/>
</dbReference>
<dbReference type="PRO" id="PR:P26364"/>
<dbReference type="Proteomes" id="UP000002311">
    <property type="component" value="Chromosome V"/>
</dbReference>
<dbReference type="RNAct" id="P26364">
    <property type="molecule type" value="protein"/>
</dbReference>
<dbReference type="GO" id="GO:0005737">
    <property type="term" value="C:cytoplasm"/>
    <property type="evidence" value="ECO:0000318"/>
    <property type="project" value="GO_Central"/>
</dbReference>
<dbReference type="GO" id="GO:0005743">
    <property type="term" value="C:mitochondrial inner membrane"/>
    <property type="evidence" value="ECO:0000314"/>
    <property type="project" value="SGD"/>
</dbReference>
<dbReference type="GO" id="GO:0005759">
    <property type="term" value="C:mitochondrial matrix"/>
    <property type="evidence" value="ECO:0000314"/>
    <property type="project" value="SGD"/>
</dbReference>
<dbReference type="GO" id="GO:0005739">
    <property type="term" value="C:mitochondrion"/>
    <property type="evidence" value="ECO:0007005"/>
    <property type="project" value="SGD"/>
</dbReference>
<dbReference type="GO" id="GO:0004017">
    <property type="term" value="F:adenylate kinase activity"/>
    <property type="evidence" value="ECO:0000318"/>
    <property type="project" value="GO_Central"/>
</dbReference>
<dbReference type="GO" id="GO:0005524">
    <property type="term" value="F:ATP binding"/>
    <property type="evidence" value="ECO:0007669"/>
    <property type="project" value="InterPro"/>
</dbReference>
<dbReference type="GO" id="GO:0005525">
    <property type="term" value="F:GTP binding"/>
    <property type="evidence" value="ECO:0007669"/>
    <property type="project" value="UniProtKB-KW"/>
</dbReference>
<dbReference type="GO" id="GO:0046899">
    <property type="term" value="F:nucleoside triphosphate adenylate kinase activity"/>
    <property type="evidence" value="ECO:0000314"/>
    <property type="project" value="SGD"/>
</dbReference>
<dbReference type="GO" id="GO:0006172">
    <property type="term" value="P:ADP biosynthetic process"/>
    <property type="evidence" value="ECO:0007669"/>
    <property type="project" value="UniProtKB-UniRule"/>
</dbReference>
<dbReference type="GO" id="GO:0046033">
    <property type="term" value="P:AMP metabolic process"/>
    <property type="evidence" value="ECO:0000318"/>
    <property type="project" value="GO_Central"/>
</dbReference>
<dbReference type="GO" id="GO:0046039">
    <property type="term" value="P:GTP metabolic process"/>
    <property type="evidence" value="ECO:0007669"/>
    <property type="project" value="UniProtKB-UniRule"/>
</dbReference>
<dbReference type="GO" id="GO:0046041">
    <property type="term" value="P:ITP metabolic process"/>
    <property type="evidence" value="ECO:0007669"/>
    <property type="project" value="UniProtKB-UniRule"/>
</dbReference>
<dbReference type="GO" id="GO:0009142">
    <property type="term" value="P:nucleoside triphosphate biosynthetic process"/>
    <property type="evidence" value="ECO:0000318"/>
    <property type="project" value="GO_Central"/>
</dbReference>
<dbReference type="GO" id="GO:0009117">
    <property type="term" value="P:nucleotide metabolic process"/>
    <property type="evidence" value="ECO:0000314"/>
    <property type="project" value="SGD"/>
</dbReference>
<dbReference type="CDD" id="cd01428">
    <property type="entry name" value="ADK"/>
    <property type="match status" value="1"/>
</dbReference>
<dbReference type="FunFam" id="3.40.50.300:FF:000106">
    <property type="entry name" value="Adenylate kinase mitochondrial"/>
    <property type="match status" value="1"/>
</dbReference>
<dbReference type="Gene3D" id="3.40.50.300">
    <property type="entry name" value="P-loop containing nucleotide triphosphate hydrolases"/>
    <property type="match status" value="1"/>
</dbReference>
<dbReference type="HAMAP" id="MF_00235">
    <property type="entry name" value="Adenylate_kinase_Adk"/>
    <property type="match status" value="1"/>
</dbReference>
<dbReference type="HAMAP" id="MF_03169">
    <property type="entry name" value="Adenylate_kinase_AK3"/>
    <property type="match status" value="1"/>
</dbReference>
<dbReference type="InterPro" id="IPR006259">
    <property type="entry name" value="Adenyl_kin_sub"/>
</dbReference>
<dbReference type="InterPro" id="IPR000850">
    <property type="entry name" value="Adenylat/UMP-CMP_kin"/>
</dbReference>
<dbReference type="InterPro" id="IPR033690">
    <property type="entry name" value="Adenylat_kinase_CS"/>
</dbReference>
<dbReference type="InterPro" id="IPR007862">
    <property type="entry name" value="Adenylate_kinase_lid-dom"/>
</dbReference>
<dbReference type="InterPro" id="IPR028586">
    <property type="entry name" value="AK3/Ak4_mitochondrial"/>
</dbReference>
<dbReference type="InterPro" id="IPR027417">
    <property type="entry name" value="P-loop_NTPase"/>
</dbReference>
<dbReference type="NCBIfam" id="TIGR01351">
    <property type="entry name" value="adk"/>
    <property type="match status" value="1"/>
</dbReference>
<dbReference type="PANTHER" id="PTHR23359">
    <property type="entry name" value="NUCLEOTIDE KINASE"/>
    <property type="match status" value="1"/>
</dbReference>
<dbReference type="Pfam" id="PF00406">
    <property type="entry name" value="ADK"/>
    <property type="match status" value="1"/>
</dbReference>
<dbReference type="Pfam" id="PF05191">
    <property type="entry name" value="ADK_lid"/>
    <property type="match status" value="1"/>
</dbReference>
<dbReference type="PRINTS" id="PR00094">
    <property type="entry name" value="ADENYLTKNASE"/>
</dbReference>
<dbReference type="SUPFAM" id="SSF52540">
    <property type="entry name" value="P-loop containing nucleoside triphosphate hydrolases"/>
    <property type="match status" value="1"/>
</dbReference>
<dbReference type="PROSITE" id="PS00113">
    <property type="entry name" value="ADENYLATE_KINASE"/>
    <property type="match status" value="1"/>
</dbReference>
<reference key="1">
    <citation type="journal article" date="1992" name="Gene">
        <title>A putative second adenylate kinase-encoding gene from the yeast Saccharomyces cerevisiae.</title>
        <authorList>
            <person name="Cooper A.J."/>
            <person name="Friedberg E.C."/>
        </authorList>
    </citation>
    <scope>NUCLEOTIDE SEQUENCE [GENOMIC DNA]</scope>
</reference>
<reference key="2">
    <citation type="journal article" date="1992" name="Mol. Gen. Genet.">
        <title>A new member of the adenylate kinase family in yeast: PAK3 is highly homologous to mammalian AK3 and is targeted to mitochondria.</title>
        <authorList>
            <person name="Schricker R."/>
            <person name="Magdolen V."/>
            <person name="Bandlow W."/>
        </authorList>
    </citation>
    <scope>NUCLEOTIDE SEQUENCE [GENOMIC DNA]</scope>
    <scope>SUBCELLULAR LOCATION</scope>
    <scope>INDUCTION</scope>
    <source>
        <strain>DL-1</strain>
    </source>
</reference>
<reference key="3">
    <citation type="journal article" date="1997" name="Nature">
        <title>The nucleotide sequence of Saccharomyces cerevisiae chromosome V.</title>
        <authorList>
            <person name="Dietrich F.S."/>
            <person name="Mulligan J.T."/>
            <person name="Hennessy K.M."/>
            <person name="Yelton M.A."/>
            <person name="Allen E."/>
            <person name="Araujo R."/>
            <person name="Aviles E."/>
            <person name="Berno A."/>
            <person name="Brennan T."/>
            <person name="Carpenter J."/>
            <person name="Chen E."/>
            <person name="Cherry J.M."/>
            <person name="Chung E."/>
            <person name="Duncan M."/>
            <person name="Guzman E."/>
            <person name="Hartzell G."/>
            <person name="Hunicke-Smith S."/>
            <person name="Hyman R.W."/>
            <person name="Kayser A."/>
            <person name="Komp C."/>
            <person name="Lashkari D."/>
            <person name="Lew H."/>
            <person name="Lin D."/>
            <person name="Mosedale D."/>
            <person name="Nakahara K."/>
            <person name="Namath A."/>
            <person name="Norgren R."/>
            <person name="Oefner P."/>
            <person name="Oh C."/>
            <person name="Petel F.X."/>
            <person name="Roberts D."/>
            <person name="Sehl P."/>
            <person name="Schramm S."/>
            <person name="Shogren T."/>
            <person name="Smith V."/>
            <person name="Taylor P."/>
            <person name="Wei Y."/>
            <person name="Botstein D."/>
            <person name="Davis R.W."/>
        </authorList>
    </citation>
    <scope>NUCLEOTIDE SEQUENCE [LARGE SCALE GENOMIC DNA]</scope>
    <source>
        <strain>ATCC 204508 / S288c</strain>
    </source>
</reference>
<reference key="4">
    <citation type="journal article" date="2014" name="G3 (Bethesda)">
        <title>The reference genome sequence of Saccharomyces cerevisiae: Then and now.</title>
        <authorList>
            <person name="Engel S.R."/>
            <person name="Dietrich F.S."/>
            <person name="Fisk D.G."/>
            <person name="Binkley G."/>
            <person name="Balakrishnan R."/>
            <person name="Costanzo M.C."/>
            <person name="Dwight S.S."/>
            <person name="Hitz B.C."/>
            <person name="Karra K."/>
            <person name="Nash R.S."/>
            <person name="Weng S."/>
            <person name="Wong E.D."/>
            <person name="Lloyd P."/>
            <person name="Skrzypek M.S."/>
            <person name="Miyasato S.R."/>
            <person name="Simison M."/>
            <person name="Cherry J.M."/>
        </authorList>
    </citation>
    <scope>GENOME REANNOTATION</scope>
    <source>
        <strain>ATCC 204508 / S288c</strain>
    </source>
</reference>
<reference key="5">
    <citation type="journal article" date="2007" name="Genome Res.">
        <title>Approaching a complete repository of sequence-verified protein-encoding clones for Saccharomyces cerevisiae.</title>
        <authorList>
            <person name="Hu Y."/>
            <person name="Rolfs A."/>
            <person name="Bhullar B."/>
            <person name="Murthy T.V.S."/>
            <person name="Zhu C."/>
            <person name="Berger M.F."/>
            <person name="Camargo A.A."/>
            <person name="Kelley F."/>
            <person name="McCarron S."/>
            <person name="Jepson D."/>
            <person name="Richardson A."/>
            <person name="Raphael J."/>
            <person name="Moreira D."/>
            <person name="Taycher E."/>
            <person name="Zuo D."/>
            <person name="Mohr S."/>
            <person name="Kane M.F."/>
            <person name="Williamson J."/>
            <person name="Simpson A.J.G."/>
            <person name="Bulyk M.L."/>
            <person name="Harlow E."/>
            <person name="Marsischky G."/>
            <person name="Kolodner R.D."/>
            <person name="LaBaer J."/>
        </authorList>
    </citation>
    <scope>NUCLEOTIDE SEQUENCE [GENOMIC DNA]</scope>
    <source>
        <strain>ATCC 204508 / S288c</strain>
    </source>
</reference>
<reference key="6">
    <citation type="journal article" date="1995" name="J. Biol. Chem.">
        <title>Strain-dependent occurrence of functional GTP:AMP phosphotransferase (AK3) in Saccharomyces cerevisiae.</title>
        <authorList>
            <person name="Schricker R."/>
            <person name="Magdolen V."/>
            <person name="Strobel G."/>
            <person name="Bogengruber E."/>
            <person name="Breitenbach M."/>
            <person name="Bandlow W."/>
        </authorList>
    </citation>
    <scope>FUNCTION</scope>
    <source>
        <strain>DL-1</strain>
    </source>
</reference>
<reference key="7">
    <citation type="journal article" date="2003" name="Nature">
        <title>Global analysis of protein expression in yeast.</title>
        <authorList>
            <person name="Ghaemmaghami S."/>
            <person name="Huh W.-K."/>
            <person name="Bower K."/>
            <person name="Howson R.W."/>
            <person name="Belle A."/>
            <person name="Dephoure N."/>
            <person name="O'Shea E.K."/>
            <person name="Weissman J.S."/>
        </authorList>
    </citation>
    <scope>LEVEL OF PROTEIN EXPRESSION [LARGE SCALE ANALYSIS]</scope>
</reference>
<reference key="8">
    <citation type="journal article" date="2005" name="J. Biol. Chem.">
        <title>A GTP:AMP phosphotransferase, Adk2p, in Saccharomyces cerevisiae. Role of the C terminus in protein folding/stabilization, thermal tolerance, and enzymatic activity.</title>
        <authorList>
            <person name="Gu Y."/>
            <person name="Gordon D.M."/>
            <person name="Amutha B."/>
            <person name="Pain D."/>
        </authorList>
    </citation>
    <scope>FUNCTION</scope>
    <scope>CATALYTIC ACTIVITY</scope>
    <scope>BIOPHYSICOCHEMICAL PROPERTIES</scope>
</reference>
<accession>P26364</accession>
<accession>D3DM78</accession>
<comment type="function">
    <text evidence="1 3 5">Involved in maintaining the homeostasis of cellular nucleotides by catalyzing the interconversion of nucleoside phosphates. Has GTP:AMP phosphotransferase and ITP:AMP phosphotransferase activities. Does not accept ATP as phosphate donor.</text>
</comment>
<comment type="catalytic activity">
    <reaction evidence="1 3">
        <text>a ribonucleoside 5'-triphosphate + AMP = a ribonucleoside 5'-diphosphate + ADP</text>
        <dbReference type="Rhea" id="RHEA:13749"/>
        <dbReference type="ChEBI" id="CHEBI:57930"/>
        <dbReference type="ChEBI" id="CHEBI:61557"/>
        <dbReference type="ChEBI" id="CHEBI:456215"/>
        <dbReference type="ChEBI" id="CHEBI:456216"/>
        <dbReference type="EC" id="2.7.4.10"/>
    </reaction>
</comment>
<comment type="biophysicochemical properties">
    <temperatureDependence>
        <text evidence="3">Optimum temperature is 30 degrees Celsius. Active at 30 degrees Celsius, and rapidly inactivated with an increase of 5 degrees Celsius.</text>
    </temperatureDependence>
</comment>
<comment type="subunit">
    <text evidence="1">Monomer.</text>
</comment>
<comment type="subcellular location">
    <subcellularLocation>
        <location evidence="1 4">Mitochondrion matrix</location>
    </subcellularLocation>
</comment>
<comment type="induction">
    <text evidence="4">Expression level is low on glucose or other fermentable carbon sources. Induced about 3-fold on glycerol, and significantly induced by ethanol.</text>
</comment>
<comment type="domain">
    <text evidence="1">Consists of three domains, a large central CORE domain and two small peripheral domains, NMPbind and LID, which undergo movements during catalysis. The LID domain closes over the site of phosphoryl transfer upon GTP binding. Assembling and dissambling the active center during each catalytic cycle provides an effective means to prevent GTP hydrolysis.</text>
</comment>
<comment type="miscellaneous">
    <text evidence="2">Present with 704 molecules/cell in log phase SD medium.</text>
</comment>
<comment type="miscellaneous">
    <text evidence="6">Depending on the yeast strain, the GTP:AMP phosphotransferase is encoded by ADK2 with or without a single base pair deletion/insertion near the 3' end of the open reading frame, resulting in a long or a short form. The ADK2 short form (this entry) is also referred to as PAK3, while the long form has been named AKY3. A sequence of the long form can be found in strain D273-10B (AC E9P974). The modified C-terminus in the long form contributes to protein folding and is critical for protein stability.</text>
</comment>
<comment type="similarity">
    <text evidence="1">Belongs to the adenylate kinase family. AK3 subfamily.</text>
</comment>
<gene>
    <name evidence="1" type="primary">ADK2</name>
    <name type="synonym">AKY3</name>
    <name type="synonym">PAK3</name>
    <name type="ordered locus">YER170W</name>
</gene>
<name>KAD3_YEAST</name>
<protein>
    <recommendedName>
        <fullName evidence="1">GTP:AMP phosphotransferase, mitochondrial</fullName>
        <ecNumber evidence="1">2.7.4.10</ecNumber>
    </recommendedName>
    <alternativeName>
        <fullName evidence="1">Adenylate kinase 3</fullName>
        <shortName evidence="1">AK 3</shortName>
    </alternativeName>
</protein>
<proteinExistence type="evidence at protein level"/>
<organism>
    <name type="scientific">Saccharomyces cerevisiae (strain ATCC 204508 / S288c)</name>
    <name type="common">Baker's yeast</name>
    <dbReference type="NCBI Taxonomy" id="559292"/>
    <lineage>
        <taxon>Eukaryota</taxon>
        <taxon>Fungi</taxon>
        <taxon>Dikarya</taxon>
        <taxon>Ascomycota</taxon>
        <taxon>Saccharomycotina</taxon>
        <taxon>Saccharomycetes</taxon>
        <taxon>Saccharomycetales</taxon>
        <taxon>Saccharomycetaceae</taxon>
        <taxon>Saccharomyces</taxon>
    </lineage>
</organism>
<feature type="chain" id="PRO_0000158907" description="GTP:AMP phosphotransferase, mitochondrial">
    <location>
        <begin position="1"/>
        <end position="225"/>
    </location>
</feature>
<feature type="region of interest" description="NMP" evidence="1">
    <location>
        <begin position="45"/>
        <end position="74"/>
    </location>
</feature>
<feature type="region of interest" description="LID" evidence="1">
    <location>
        <begin position="144"/>
        <end position="181"/>
    </location>
</feature>
<feature type="binding site" evidence="1">
    <location>
        <begin position="24"/>
        <end position="29"/>
    </location>
    <ligand>
        <name>GTP</name>
        <dbReference type="ChEBI" id="CHEBI:37565"/>
    </ligand>
</feature>
<feature type="binding site" evidence="1">
    <location>
        <position position="46"/>
    </location>
    <ligand>
        <name>AMP</name>
        <dbReference type="ChEBI" id="CHEBI:456215"/>
    </ligand>
</feature>
<feature type="binding site" evidence="1">
    <location>
        <position position="51"/>
    </location>
    <ligand>
        <name>AMP</name>
        <dbReference type="ChEBI" id="CHEBI:456215"/>
    </ligand>
</feature>
<feature type="binding site" evidence="1">
    <location>
        <begin position="72"/>
        <end position="74"/>
    </location>
    <ligand>
        <name>AMP</name>
        <dbReference type="ChEBI" id="CHEBI:456215"/>
    </ligand>
</feature>
<feature type="binding site" evidence="1">
    <location>
        <begin position="103"/>
        <end position="106"/>
    </location>
    <ligand>
        <name>AMP</name>
        <dbReference type="ChEBI" id="CHEBI:456215"/>
    </ligand>
</feature>
<feature type="binding site" evidence="1">
    <location>
        <position position="110"/>
    </location>
    <ligand>
        <name>AMP</name>
        <dbReference type="ChEBI" id="CHEBI:456215"/>
    </ligand>
</feature>
<feature type="binding site" evidence="1">
    <location>
        <position position="145"/>
    </location>
    <ligand>
        <name>GTP</name>
        <dbReference type="ChEBI" id="CHEBI:37565"/>
    </ligand>
</feature>
<feature type="binding site" evidence="1">
    <location>
        <begin position="154"/>
        <end position="155"/>
    </location>
    <ligand>
        <name>GTP</name>
        <dbReference type="ChEBI" id="CHEBI:37565"/>
    </ligand>
</feature>
<feature type="binding site" evidence="1">
    <location>
        <position position="178"/>
    </location>
    <ligand>
        <name>AMP</name>
        <dbReference type="ChEBI" id="CHEBI:456215"/>
    </ligand>
</feature>
<feature type="binding site" evidence="1">
    <location>
        <position position="189"/>
    </location>
    <ligand>
        <name>AMP</name>
        <dbReference type="ChEBI" id="CHEBI:456215"/>
    </ligand>
</feature>
<feature type="binding site" evidence="1">
    <location>
        <position position="218"/>
    </location>
    <ligand>
        <name>GTP</name>
        <dbReference type="ChEBI" id="CHEBI:37565"/>
    </ligand>
</feature>
<evidence type="ECO:0000255" key="1">
    <source>
        <dbReference type="HAMAP-Rule" id="MF_03169"/>
    </source>
</evidence>
<evidence type="ECO:0000269" key="2">
    <source>
    </source>
</evidence>
<evidence type="ECO:0000269" key="3">
    <source>
    </source>
</evidence>
<evidence type="ECO:0000269" key="4">
    <source>
    </source>
</evidence>
<evidence type="ECO:0000269" key="5">
    <source>
    </source>
</evidence>
<evidence type="ECO:0000305" key="6">
    <source>
    </source>
</evidence>